<dbReference type="EC" id="2.7.8.28" evidence="1"/>
<dbReference type="EMBL" id="CP000867">
    <property type="protein sequence ID" value="ABX01323.1"/>
    <property type="molecule type" value="Genomic_DNA"/>
</dbReference>
<dbReference type="SMR" id="A9A6P5"/>
<dbReference type="STRING" id="444158.MmarC6_0506"/>
<dbReference type="KEGG" id="mmx:MmarC6_0506"/>
<dbReference type="eggNOG" id="arCOG04395">
    <property type="taxonomic scope" value="Archaea"/>
</dbReference>
<dbReference type="HOGENOM" id="CLU_055795_1_0_2"/>
<dbReference type="OrthoDB" id="59563at2157"/>
<dbReference type="PhylomeDB" id="A9A6P5"/>
<dbReference type="UniPathway" id="UPA00071"/>
<dbReference type="GO" id="GO:0043743">
    <property type="term" value="F:LPPG:FO 2-phospho-L-lactate transferase activity"/>
    <property type="evidence" value="ECO:0007669"/>
    <property type="project" value="UniProtKB-EC"/>
</dbReference>
<dbReference type="GO" id="GO:0000287">
    <property type="term" value="F:magnesium ion binding"/>
    <property type="evidence" value="ECO:0007669"/>
    <property type="project" value="InterPro"/>
</dbReference>
<dbReference type="GO" id="GO:0052645">
    <property type="term" value="P:F420-0 metabolic process"/>
    <property type="evidence" value="ECO:0007669"/>
    <property type="project" value="UniProtKB-UniRule"/>
</dbReference>
<dbReference type="CDD" id="cd07186">
    <property type="entry name" value="CofD_like"/>
    <property type="match status" value="1"/>
</dbReference>
<dbReference type="Gene3D" id="1.10.8.240">
    <property type="entry name" value="CofD-like domain"/>
    <property type="match status" value="1"/>
</dbReference>
<dbReference type="Gene3D" id="3.40.50.10680">
    <property type="entry name" value="CofD-like domains"/>
    <property type="match status" value="1"/>
</dbReference>
<dbReference type="HAMAP" id="MF_01257">
    <property type="entry name" value="CofD"/>
    <property type="match status" value="1"/>
</dbReference>
<dbReference type="InterPro" id="IPR002882">
    <property type="entry name" value="CofD"/>
</dbReference>
<dbReference type="InterPro" id="IPR038136">
    <property type="entry name" value="CofD-like_dom_sf"/>
</dbReference>
<dbReference type="InterPro" id="IPR010115">
    <property type="entry name" value="FbiA/CofD"/>
</dbReference>
<dbReference type="NCBIfam" id="TIGR01819">
    <property type="entry name" value="F420_cofD"/>
    <property type="match status" value="1"/>
</dbReference>
<dbReference type="PANTHER" id="PTHR43007">
    <property type="entry name" value="2-PHOSPHO-L-LACTATE TRANSFERASE"/>
    <property type="match status" value="1"/>
</dbReference>
<dbReference type="PANTHER" id="PTHR43007:SF1">
    <property type="entry name" value="2-PHOSPHO-L-LACTATE TRANSFERASE"/>
    <property type="match status" value="1"/>
</dbReference>
<dbReference type="Pfam" id="PF01933">
    <property type="entry name" value="CofD"/>
    <property type="match status" value="1"/>
</dbReference>
<dbReference type="SUPFAM" id="SSF142338">
    <property type="entry name" value="CofD-like"/>
    <property type="match status" value="1"/>
</dbReference>
<gene>
    <name evidence="1" type="primary">cofD</name>
    <name type="ordered locus">MmarC6_0506</name>
</gene>
<reference key="1">
    <citation type="submission" date="2007-10" db="EMBL/GenBank/DDBJ databases">
        <title>Complete sequence of Methanococcus maripaludis C6.</title>
        <authorList>
            <consortium name="US DOE Joint Genome Institute"/>
            <person name="Copeland A."/>
            <person name="Lucas S."/>
            <person name="Lapidus A."/>
            <person name="Barry K."/>
            <person name="Glavina del Rio T."/>
            <person name="Dalin E."/>
            <person name="Tice H."/>
            <person name="Pitluck S."/>
            <person name="Clum A."/>
            <person name="Schmutz J."/>
            <person name="Larimer F."/>
            <person name="Land M."/>
            <person name="Hauser L."/>
            <person name="Kyrpides N."/>
            <person name="Mikhailova N."/>
            <person name="Sieprawska-Lupa M."/>
            <person name="Whitman W.B."/>
            <person name="Richardson P."/>
        </authorList>
    </citation>
    <scope>NUCLEOTIDE SEQUENCE [LARGE SCALE GENOMIC DNA]</scope>
    <source>
        <strain>C6 / ATCC BAA-1332</strain>
    </source>
</reference>
<comment type="function">
    <text evidence="1">Catalyzes the transfer of the 2-phospholactate moiety from (2S)-lactyl-2-diphospho-5'-guanosine to 7,8-didemethyl-8-hydroxy-5-deazariboflavin (FO) with the formation of oxidized coenzyme F420-0 and GMP.</text>
</comment>
<comment type="catalytic activity">
    <reaction evidence="1">
        <text>(2S)-lactyl-2-diphospho-5'-guanosine + 7,8-didemethyl-8-hydroxy-5-deazariboflavin = oxidized coenzyme F420-0 + GMP + H(+)</text>
        <dbReference type="Rhea" id="RHEA:63444"/>
        <dbReference type="ChEBI" id="CHEBI:15378"/>
        <dbReference type="ChEBI" id="CHEBI:58115"/>
        <dbReference type="ChEBI" id="CHEBI:59435"/>
        <dbReference type="ChEBI" id="CHEBI:59904"/>
        <dbReference type="ChEBI" id="CHEBI:59907"/>
        <dbReference type="EC" id="2.7.8.28"/>
    </reaction>
</comment>
<comment type="cofactor">
    <cofactor evidence="1">
        <name>Mg(2+)</name>
        <dbReference type="ChEBI" id="CHEBI:18420"/>
    </cofactor>
</comment>
<comment type="pathway">
    <text evidence="1">Cofactor biosynthesis; coenzyme F420 biosynthesis.</text>
</comment>
<comment type="subunit">
    <text evidence="1">Homodimer.</text>
</comment>
<comment type="similarity">
    <text evidence="1">Belongs to the CofD family.</text>
</comment>
<name>COFD_METM6</name>
<keyword id="KW-0460">Magnesium</keyword>
<keyword id="KW-0808">Transferase</keyword>
<protein>
    <recommendedName>
        <fullName evidence="1">2-phospho-L-lactate transferase</fullName>
        <ecNumber evidence="1">2.7.8.28</ecNumber>
    </recommendedName>
</protein>
<accession>A9A6P5</accession>
<feature type="chain" id="PRO_1000139980" description="2-phospho-L-lactate transferase">
    <location>
        <begin position="1"/>
        <end position="309"/>
    </location>
</feature>
<feature type="binding site" evidence="1">
    <location>
        <position position="50"/>
    </location>
    <ligand>
        <name>7,8-didemethyl-8-hydroxy-5-deazariboflavin</name>
        <dbReference type="ChEBI" id="CHEBI:59904"/>
    </ligand>
</feature>
<feature type="binding site" evidence="1">
    <location>
        <position position="89"/>
    </location>
    <ligand>
        <name>7,8-didemethyl-8-hydroxy-5-deazariboflavin</name>
        <dbReference type="ChEBI" id="CHEBI:59904"/>
    </ligand>
</feature>
<sequence length="309" mass="34534">MKITILSGGTGTPKLIQGFKEILPNEDISVIVNTGEDTYIGDIYLSPDIDTVLYTFSDLINDETWYGLKGDTFICHEQLKKFGSDEVLKIGDKDRALKMHKASSLKKGVLMSEIVDIERNSLSIKSKIYPMSNEKVESKVLIEENNEKILLKFHDFWIFRKGNAKVLDIFYENSNYAKAADGVLKAIEESDFVLIGPSNPITSIGPILSISEIKNALKEKLVFAVSPIVGENPVSGPAGTLMNAKGYPVNAIGVYEYYKDIVDVLVLDNSDINKKKDINCEVLYANTIMKTIDDKINLARNILDYYKSR</sequence>
<evidence type="ECO:0000255" key="1">
    <source>
        <dbReference type="HAMAP-Rule" id="MF_01257"/>
    </source>
</evidence>
<organism>
    <name type="scientific">Methanococcus maripaludis (strain C6 / ATCC BAA-1332)</name>
    <dbReference type="NCBI Taxonomy" id="444158"/>
    <lineage>
        <taxon>Archaea</taxon>
        <taxon>Methanobacteriati</taxon>
        <taxon>Methanobacteriota</taxon>
        <taxon>Methanomada group</taxon>
        <taxon>Methanococci</taxon>
        <taxon>Methanococcales</taxon>
        <taxon>Methanococcaceae</taxon>
        <taxon>Methanococcus</taxon>
    </lineage>
</organism>
<proteinExistence type="inferred from homology"/>